<reference key="1">
    <citation type="journal article" date="2001" name="Proc. Natl. Acad. Sci. U.S.A.">
        <title>HIN-1, a putative cytokine highly expressed in normal but not cancerous mammary epithelial cells.</title>
        <authorList>
            <person name="Krop I.E."/>
            <person name="Sgroi D."/>
            <person name="Porter D.A."/>
            <person name="Lunetta K.L."/>
            <person name="LeVangie R."/>
            <person name="Seth P."/>
            <person name="Kaelin C.M."/>
            <person name="Rhei E."/>
            <person name="Bosenberg M."/>
            <person name="Schnitt S."/>
            <person name="Marks J.R."/>
            <person name="Pagon Z."/>
            <person name="Belina D."/>
            <person name="Razumovic J."/>
            <person name="Polyak K."/>
        </authorList>
    </citation>
    <scope>NUCLEOTIDE SEQUENCE [MRNA]</scope>
</reference>
<reference key="2">
    <citation type="journal article" date="2001" name="Mol. Endocrinol.">
        <title>UGRP1, a uteroglobin/Clara cell secretory protein-related protein, is a novel lung-enriched downstream target gene for the T/EBP/NKX2.1 homeodomain transcription factor.</title>
        <authorList>
            <person name="Niimi T."/>
            <person name="Keck-Waggoner C.L."/>
            <person name="Popescu N.C."/>
            <person name="Zhou Y."/>
            <person name="Levitt R.C."/>
            <person name="Kimura S."/>
        </authorList>
    </citation>
    <scope>NUCLEOTIDE SEQUENCE [MRNA]</scope>
</reference>
<reference key="3">
    <citation type="submission" date="2001-10" db="EMBL/GenBank/DDBJ databases">
        <title>Molecular cloning of PnSP-1, a protein of the respiratory tract with potential association to atopy.</title>
        <authorList>
            <person name="Clippe A."/>
            <person name="Laing I.A."/>
            <person name="LeSouef P.N."/>
            <person name="Bernard A."/>
            <person name="Knoops B."/>
        </authorList>
    </citation>
    <scope>NUCLEOTIDE SEQUENCE [MRNA]</scope>
    <source>
        <strain>NMRI</strain>
    </source>
</reference>
<reference key="4">
    <citation type="journal article" date="2002" name="Am. J. Respir. Crit. Care Med.">
        <title>Secretoglobins SCGB3A1 and SCGB3A2 define secretory cell subsets in mouse and human airways.</title>
        <authorList>
            <person name="Reynolds S.D."/>
            <person name="Reynolds P.R."/>
            <person name="Pryhuber G.S."/>
            <person name="Finder J.D."/>
            <person name="Stripp B.R."/>
        </authorList>
    </citation>
    <scope>TISSUE SPECIFICITY</scope>
</reference>
<reference key="5">
    <citation type="journal article" date="2002" name="Mech. Dev.">
        <title>Expression of high in normal-1 (HIN-1) and uteroglobin related protein-1 (UGRP-1) in adult and developing tissues.</title>
        <authorList>
            <person name="Porter D."/>
            <person name="Lahti-Domenici J."/>
            <person name="Torres-Arzayus M."/>
            <person name="Chin L."/>
            <person name="Polyak K."/>
        </authorList>
    </citation>
    <scope>TISSUE SPECIFICITY</scope>
    <scope>DEVELOPMENTAL STAGE</scope>
</reference>
<gene>
    <name type="primary">Scgb3a1</name>
    <name type="synonym">Hin1</name>
    <name type="synonym">Pnsp2</name>
    <name type="synonym">Ugrp2</name>
</gene>
<keyword id="KW-0202">Cytokine</keyword>
<keyword id="KW-1015">Disulfide bond</keyword>
<keyword id="KW-1185">Reference proteome</keyword>
<keyword id="KW-0964">Secreted</keyword>
<keyword id="KW-0732">Signal</keyword>
<dbReference type="EMBL" id="AF313456">
    <property type="protein sequence ID" value="AAL26216.1"/>
    <property type="molecule type" value="mRNA"/>
</dbReference>
<dbReference type="EMBL" id="AF436840">
    <property type="protein sequence ID" value="AAQ04482.1"/>
    <property type="molecule type" value="mRNA"/>
</dbReference>
<dbReference type="CCDS" id="CCDS24619.1"/>
<dbReference type="RefSeq" id="NP_473378.1">
    <property type="nucleotide sequence ID" value="NM_054037.2"/>
</dbReference>
<dbReference type="FunCoup" id="Q920D7">
    <property type="interactions" value="257"/>
</dbReference>
<dbReference type="STRING" id="10090.ENSMUSP00000043325"/>
<dbReference type="PaxDb" id="10090-ENSMUSP00000043325"/>
<dbReference type="ProteomicsDB" id="257214"/>
<dbReference type="Antibodypedia" id="29609">
    <property type="antibodies" value="115 antibodies from 20 providers"/>
</dbReference>
<dbReference type="DNASU" id="68662"/>
<dbReference type="Ensembl" id="ENSMUST00000043873.10">
    <property type="protein sequence ID" value="ENSMUSP00000043325.4"/>
    <property type="gene ID" value="ENSMUSG00000064057.13"/>
</dbReference>
<dbReference type="GeneID" id="68662"/>
<dbReference type="KEGG" id="mmu:68662"/>
<dbReference type="UCSC" id="uc007iqw.2">
    <property type="organism name" value="mouse"/>
</dbReference>
<dbReference type="AGR" id="MGI:1915912"/>
<dbReference type="CTD" id="92304"/>
<dbReference type="MGI" id="MGI:1915912">
    <property type="gene designation" value="Scgb3a1"/>
</dbReference>
<dbReference type="VEuPathDB" id="HostDB:ENSMUSG00000064057"/>
<dbReference type="eggNOG" id="ENOG502T3N5">
    <property type="taxonomic scope" value="Eukaryota"/>
</dbReference>
<dbReference type="GeneTree" id="ENSGT00420000029848"/>
<dbReference type="HOGENOM" id="CLU_146812_1_0_1"/>
<dbReference type="InParanoid" id="Q920D7"/>
<dbReference type="OMA" id="MELTATF"/>
<dbReference type="OrthoDB" id="9449786at2759"/>
<dbReference type="PhylomeDB" id="Q920D7"/>
<dbReference type="TreeFam" id="TF336928"/>
<dbReference type="BioGRID-ORCS" id="68662">
    <property type="hits" value="3 hits in 76 CRISPR screens"/>
</dbReference>
<dbReference type="ChiTaRS" id="Scgb3a1">
    <property type="organism name" value="mouse"/>
</dbReference>
<dbReference type="PRO" id="PR:Q920D7"/>
<dbReference type="Proteomes" id="UP000000589">
    <property type="component" value="Chromosome 11"/>
</dbReference>
<dbReference type="RNAct" id="Q920D7">
    <property type="molecule type" value="protein"/>
</dbReference>
<dbReference type="Bgee" id="ENSMUSG00000064057">
    <property type="expression patterns" value="Expressed in trachea and 66 other cell types or tissues"/>
</dbReference>
<dbReference type="ExpressionAtlas" id="Q920D7">
    <property type="expression patterns" value="baseline and differential"/>
</dbReference>
<dbReference type="GO" id="GO:0005615">
    <property type="term" value="C:extracellular space"/>
    <property type="evidence" value="ECO:0007669"/>
    <property type="project" value="UniProtKB-KW"/>
</dbReference>
<dbReference type="GO" id="GO:0005125">
    <property type="term" value="F:cytokine activity"/>
    <property type="evidence" value="ECO:0007669"/>
    <property type="project" value="UniProtKB-KW"/>
</dbReference>
<dbReference type="GO" id="GO:1901741">
    <property type="term" value="P:positive regulation of myoblast fusion"/>
    <property type="evidence" value="ECO:0000315"/>
    <property type="project" value="MGI"/>
</dbReference>
<dbReference type="InterPro" id="IPR040301">
    <property type="entry name" value="Secretoglobin_3A"/>
</dbReference>
<dbReference type="PANTHER" id="PTHR34829:SF1">
    <property type="entry name" value="SECRETOGLOBIN FAMILY 3A MEMBER 1"/>
    <property type="match status" value="1"/>
</dbReference>
<dbReference type="PANTHER" id="PTHR34829">
    <property type="entry name" value="SECRETOGLOBIN FAMILY 3A MEMBER 2"/>
    <property type="match status" value="1"/>
</dbReference>
<dbReference type="Pfam" id="PF20490">
    <property type="entry name" value="SCGB3A"/>
    <property type="match status" value="1"/>
</dbReference>
<organism>
    <name type="scientific">Mus musculus</name>
    <name type="common">Mouse</name>
    <dbReference type="NCBI Taxonomy" id="10090"/>
    <lineage>
        <taxon>Eukaryota</taxon>
        <taxon>Metazoa</taxon>
        <taxon>Chordata</taxon>
        <taxon>Craniata</taxon>
        <taxon>Vertebrata</taxon>
        <taxon>Euteleostomi</taxon>
        <taxon>Mammalia</taxon>
        <taxon>Eutheria</taxon>
        <taxon>Euarchontoglires</taxon>
        <taxon>Glires</taxon>
        <taxon>Rodentia</taxon>
        <taxon>Myomorpha</taxon>
        <taxon>Muroidea</taxon>
        <taxon>Muridae</taxon>
        <taxon>Murinae</taxon>
        <taxon>Mus</taxon>
        <taxon>Mus</taxon>
    </lineage>
</organism>
<protein>
    <recommendedName>
        <fullName>Secretoglobin family 3A member 1</fullName>
    </recommendedName>
    <alternativeName>
        <fullName>Cytokine HIN-1</fullName>
    </alternativeName>
    <alternativeName>
        <fullName>High in normal 1</fullName>
    </alternativeName>
    <alternativeName>
        <fullName>Pneumo secretory protein 2</fullName>
        <shortName>PnSP-2</shortName>
    </alternativeName>
    <alternativeName>
        <fullName>Uteroglobin-related protein 2</fullName>
    </alternativeName>
</protein>
<proteinExistence type="evidence at transcript level"/>
<name>SG3A1_MOUSE</name>
<sequence length="104" mass="10591">MKLTTTFLVLCVALLSDSGVAFFMDSLAKPAVEPVAALAPAAEAVAGAVPSLPLSHLAILRFILASMGIPLDPLIEGSRKCVTELGPEAVGAVKSLLGVLTMFG</sequence>
<evidence type="ECO:0000250" key="1">
    <source>
        <dbReference type="UniProtKB" id="Q920H1"/>
    </source>
</evidence>
<evidence type="ECO:0000250" key="2">
    <source>
        <dbReference type="UniProtKB" id="Q96QR1"/>
    </source>
</evidence>
<evidence type="ECO:0000269" key="3">
    <source>
    </source>
</evidence>
<evidence type="ECO:0000269" key="4">
    <source>
    </source>
</evidence>
<evidence type="ECO:0000305" key="5"/>
<accession>Q920D7</accession>
<feature type="signal peptide" evidence="2">
    <location>
        <begin position="1"/>
        <end position="21"/>
    </location>
</feature>
<feature type="chain" id="PRO_0000036384" description="Secretoglobin family 3A member 1">
    <location>
        <begin position="22"/>
        <end position="104"/>
    </location>
</feature>
<feature type="disulfide bond" description="Interchain" evidence="1">
    <location>
        <position position="81"/>
    </location>
</feature>
<comment type="function">
    <text evidence="2">Secreted cytokine-like protein. Inhibits cell growth in vitro.</text>
</comment>
<comment type="subunit">
    <text evidence="1">Homodimer; disulfide-linked.</text>
</comment>
<comment type="subcellular location">
    <subcellularLocation>
        <location evidence="2">Secreted</location>
    </subcellularLocation>
</comment>
<comment type="tissue specificity">
    <text evidence="3 4">Highly expressed in lung, where it localizes to epithelial cells lining the trachea and bronchi (PubMed:12175512, PubMed:12406855). Expression in lung is mainly restricted to bronchi, submucosal glands of the trachea, and tracheal epithelium, with little expression in terminal bronchioles (PubMed:12406855). Expressed in uterus where it localizes to epithelial cells of the uterine glands (PubMed:12175512). Also detected in heart, stomach and small intestine (PubMed:12175512).</text>
</comment>
<comment type="developmental stage">
    <text evidence="3">Detected in lung at embryonic stage 18.5 dpc. During gestation, expressed in the mammary gland from 6.5 dpc with highest expression at 10.5 dpc. Expression then declines, but later increases again during mammary gland involution at 4-21 days post partum.</text>
</comment>
<comment type="similarity">
    <text evidence="5">Belongs to the secretoglobin family. UGRP subfamily.</text>
</comment>